<reference key="1">
    <citation type="journal article" date="1998" name="Nature">
        <title>The genome sequence of Rickettsia prowazekii and the origin of mitochondria.</title>
        <authorList>
            <person name="Andersson S.G.E."/>
            <person name="Zomorodipour A."/>
            <person name="Andersson J.O."/>
            <person name="Sicheritz-Ponten T."/>
            <person name="Alsmark U.C.M."/>
            <person name="Podowski R.M."/>
            <person name="Naeslund A.K."/>
            <person name="Eriksson A.-S."/>
            <person name="Winkler H.H."/>
            <person name="Kurland C.G."/>
        </authorList>
    </citation>
    <scope>NUCLEOTIDE SEQUENCE [LARGE SCALE GENOMIC DNA]</scope>
    <source>
        <strain>Madrid E</strain>
    </source>
</reference>
<keyword id="KW-0997">Cell inner membrane</keyword>
<keyword id="KW-1003">Cell membrane</keyword>
<keyword id="KW-0472">Membrane</keyword>
<keyword id="KW-0653">Protein transport</keyword>
<keyword id="KW-1185">Reference proteome</keyword>
<keyword id="KW-0811">Translocation</keyword>
<keyword id="KW-0812">Transmembrane</keyword>
<keyword id="KW-1133">Transmembrane helix</keyword>
<keyword id="KW-0813">Transport</keyword>
<evidence type="ECO:0000255" key="1">
    <source>
        <dbReference type="HAMAP-Rule" id="MF_00902"/>
    </source>
</evidence>
<organism>
    <name type="scientific">Rickettsia prowazekii (strain Madrid E)</name>
    <dbReference type="NCBI Taxonomy" id="272947"/>
    <lineage>
        <taxon>Bacteria</taxon>
        <taxon>Pseudomonadati</taxon>
        <taxon>Pseudomonadota</taxon>
        <taxon>Alphaproteobacteria</taxon>
        <taxon>Rickettsiales</taxon>
        <taxon>Rickettsiaceae</taxon>
        <taxon>Rickettsieae</taxon>
        <taxon>Rickettsia</taxon>
        <taxon>typhus group</taxon>
    </lineage>
</organism>
<name>TATC_RICPR</name>
<gene>
    <name evidence="1" type="primary">tatC</name>
    <name type="ordered locus">RP782</name>
</gene>
<protein>
    <recommendedName>
        <fullName evidence="1">Sec-independent protein translocase protein TatC</fullName>
    </recommendedName>
</protein>
<accession>Q9ZCG6</accession>
<comment type="function">
    <text evidence="1">Part of the twin-arginine translocation (Tat) system that transports large folded proteins containing a characteristic twin-arginine motif in their signal peptide across membranes. Together with TatB, TatC is part of a receptor directly interacting with Tat signal peptides.</text>
</comment>
<comment type="subunit">
    <text evidence="1">The Tat system comprises two distinct complexes: a TatABC complex, containing multiple copies of TatA, TatB and TatC subunits, and a separate TatA complex, containing only TatA subunits. Substrates initially bind to the TatABC complex, which probably triggers association of the separate TatA complex to form the active translocon.</text>
</comment>
<comment type="subcellular location">
    <subcellularLocation>
        <location evidence="1">Cell inner membrane</location>
        <topology evidence="1">Multi-pass membrane protein</topology>
    </subcellularLocation>
</comment>
<comment type="similarity">
    <text evidence="1">Belongs to the TatC family.</text>
</comment>
<dbReference type="EMBL" id="AJ235273">
    <property type="protein sequence ID" value="CAA15208.1"/>
    <property type="molecule type" value="Genomic_DNA"/>
</dbReference>
<dbReference type="PIR" id="H71638">
    <property type="entry name" value="H71638"/>
</dbReference>
<dbReference type="RefSeq" id="NP_221132.1">
    <property type="nucleotide sequence ID" value="NC_000963.1"/>
</dbReference>
<dbReference type="RefSeq" id="WP_004599650.1">
    <property type="nucleotide sequence ID" value="NC_000963.1"/>
</dbReference>
<dbReference type="SMR" id="Q9ZCG6"/>
<dbReference type="STRING" id="272947.gene:17555851"/>
<dbReference type="TCDB" id="2.A.64.1.8">
    <property type="family name" value="the twin arginine targeting (tat) family"/>
</dbReference>
<dbReference type="EnsemblBacteria" id="CAA15208">
    <property type="protein sequence ID" value="CAA15208"/>
    <property type="gene ID" value="CAA15208"/>
</dbReference>
<dbReference type="GeneID" id="57569905"/>
<dbReference type="KEGG" id="rpr:RP782"/>
<dbReference type="PATRIC" id="fig|272947.5.peg.818"/>
<dbReference type="eggNOG" id="COG0805">
    <property type="taxonomic scope" value="Bacteria"/>
</dbReference>
<dbReference type="HOGENOM" id="CLU_031942_1_0_5"/>
<dbReference type="OrthoDB" id="9777044at2"/>
<dbReference type="Proteomes" id="UP000002480">
    <property type="component" value="Chromosome"/>
</dbReference>
<dbReference type="GO" id="GO:0033281">
    <property type="term" value="C:TAT protein transport complex"/>
    <property type="evidence" value="ECO:0007669"/>
    <property type="project" value="UniProtKB-UniRule"/>
</dbReference>
<dbReference type="GO" id="GO:0009977">
    <property type="term" value="F:proton motive force dependent protein transmembrane transporter activity"/>
    <property type="evidence" value="ECO:0007669"/>
    <property type="project" value="TreeGrafter"/>
</dbReference>
<dbReference type="GO" id="GO:0065002">
    <property type="term" value="P:intracellular protein transmembrane transport"/>
    <property type="evidence" value="ECO:0007669"/>
    <property type="project" value="TreeGrafter"/>
</dbReference>
<dbReference type="GO" id="GO:0043953">
    <property type="term" value="P:protein transport by the Tat complex"/>
    <property type="evidence" value="ECO:0007669"/>
    <property type="project" value="UniProtKB-UniRule"/>
</dbReference>
<dbReference type="HAMAP" id="MF_00902">
    <property type="entry name" value="TatC"/>
    <property type="match status" value="1"/>
</dbReference>
<dbReference type="InterPro" id="IPR019820">
    <property type="entry name" value="Sec-indep_translocase_CS"/>
</dbReference>
<dbReference type="InterPro" id="IPR002033">
    <property type="entry name" value="TatC"/>
</dbReference>
<dbReference type="NCBIfam" id="TIGR00945">
    <property type="entry name" value="tatC"/>
    <property type="match status" value="1"/>
</dbReference>
<dbReference type="PANTHER" id="PTHR30371">
    <property type="entry name" value="SEC-INDEPENDENT PROTEIN TRANSLOCASE PROTEIN TATC"/>
    <property type="match status" value="1"/>
</dbReference>
<dbReference type="PANTHER" id="PTHR30371:SF0">
    <property type="entry name" value="SEC-INDEPENDENT PROTEIN TRANSLOCASE PROTEIN TATC, CHLOROPLASTIC-RELATED"/>
    <property type="match status" value="1"/>
</dbReference>
<dbReference type="Pfam" id="PF00902">
    <property type="entry name" value="TatC"/>
    <property type="match status" value="1"/>
</dbReference>
<dbReference type="PRINTS" id="PR01840">
    <property type="entry name" value="TATCFAMILY"/>
</dbReference>
<dbReference type="PROSITE" id="PS01218">
    <property type="entry name" value="TATC"/>
    <property type="match status" value="1"/>
</dbReference>
<sequence length="251" mass="29278">MKLYSFQEHLLEFKIRLLRIFTAFIIIFAICYYFSDYIYSFLLEPLAKLSGDTVRNIIYTGLTEAFFTYIKLSAFTAFTIIIPIIALECYLFISPGLYRHEKKIIAFILFMSPILFWCGSIFVFYFVMPKAWNFFLSFEKRDMIVPIILEARISEYLNLVIHLIIAFGIAFQLPIVIIVLNILKIVKTQTLKKKRRIAVVINFIIAGILTPPDILSQFALAIPLLLLYETSIIICNFIETPRTLNVKYQMD</sequence>
<proteinExistence type="inferred from homology"/>
<feature type="chain" id="PRO_0000098092" description="Sec-independent protein translocase protein TatC">
    <location>
        <begin position="1"/>
        <end position="251"/>
    </location>
</feature>
<feature type="transmembrane region" description="Helical" evidence="1">
    <location>
        <begin position="23"/>
        <end position="43"/>
    </location>
</feature>
<feature type="transmembrane region" description="Helical" evidence="1">
    <location>
        <begin position="73"/>
        <end position="93"/>
    </location>
</feature>
<feature type="transmembrane region" description="Helical" evidence="1">
    <location>
        <begin position="104"/>
        <end position="124"/>
    </location>
</feature>
<feature type="transmembrane region" description="Helical" evidence="1">
    <location>
        <begin position="159"/>
        <end position="179"/>
    </location>
</feature>
<feature type="transmembrane region" description="Helical" evidence="1">
    <location>
        <begin position="197"/>
        <end position="217"/>
    </location>
</feature>
<feature type="transmembrane region" description="Helical" evidence="1">
    <location>
        <begin position="218"/>
        <end position="238"/>
    </location>
</feature>